<feature type="chain" id="PRO_0000282400" description="Diphthine--ammonia ligase">
    <location>
        <begin position="1"/>
        <end position="255"/>
    </location>
</feature>
<feature type="splice variant" id="VSP_024127" description="In isoform 2." evidence="2">
    <location>
        <position position="39"/>
    </location>
</feature>
<feature type="sequence conflict" description="In Ref. 1; AAH90272." evidence="3" ref="1">
    <original>L</original>
    <variation>P</variation>
    <location>
        <position position="184"/>
    </location>
</feature>
<accession>A2RV01</accession>
<accession>Q5EAS1</accession>
<comment type="function">
    <text evidence="1">Amidase that catalyzes the last step of diphthamide biosynthesis using ammonium and ATP. Diphthamide biosynthesis consists in the conversion of an L-histidine residue in the translation elongation factor eEF-2 (EEF2) to diphthamide (By similarity).</text>
</comment>
<comment type="catalytic activity">
    <reaction>
        <text>diphthine-[translation elongation factor 2] + NH4(+) + ATP = diphthamide-[translation elongation factor 2] + AMP + diphosphate + H(+)</text>
        <dbReference type="Rhea" id="RHEA:19753"/>
        <dbReference type="Rhea" id="RHEA-COMP:10172"/>
        <dbReference type="Rhea" id="RHEA-COMP:10174"/>
        <dbReference type="ChEBI" id="CHEBI:15378"/>
        <dbReference type="ChEBI" id="CHEBI:16692"/>
        <dbReference type="ChEBI" id="CHEBI:28938"/>
        <dbReference type="ChEBI" id="CHEBI:30616"/>
        <dbReference type="ChEBI" id="CHEBI:33019"/>
        <dbReference type="ChEBI" id="CHEBI:82696"/>
        <dbReference type="ChEBI" id="CHEBI:456215"/>
        <dbReference type="EC" id="6.3.1.14"/>
    </reaction>
</comment>
<comment type="pathway">
    <text>Protein modification; peptidyl-diphthamide biosynthesis.</text>
</comment>
<comment type="alternative products">
    <event type="alternative splicing"/>
    <isoform>
        <id>A2RV01-1</id>
        <name>1</name>
        <sequence type="displayed"/>
    </isoform>
    <isoform>
        <id>A2RV01-2</id>
        <name>2</name>
        <sequence type="described" ref="VSP_024127"/>
    </isoform>
</comment>
<comment type="similarity">
    <text evidence="3">Belongs to the Diphthine--ammonia ligase family.</text>
</comment>
<gene>
    <name type="primary">dph6</name>
    <name type="synonym">atpbd4</name>
    <name type="ORF">zgc:110758</name>
</gene>
<sequence length="255" mass="28401">MRVVGLISGGKDSCFNMLQCVSAGHSIVALANLRPADHAASDELDSYMYQTVGHQAVDLIAEAMGLPLYRRTIEGSSVHIDREYSPTDGDEVEDLYQLLKHVKEEMHVDGVSVGAILSDYQRVRVENVCARLQLQPLAYLWRRDQAALLSEMISSGLHAILIKVAAFGLHPDKHLGKSLAEMELYLHELSEKYGVHICGEGGEYETFTLDCPLFKKKIIIDATETVIHSDDAFAPVGFLRFTKMHTEDKTEVRTL</sequence>
<keyword id="KW-0025">Alternative splicing</keyword>
<keyword id="KW-0067">ATP-binding</keyword>
<keyword id="KW-0436">Ligase</keyword>
<keyword id="KW-0547">Nucleotide-binding</keyword>
<keyword id="KW-1185">Reference proteome</keyword>
<organism>
    <name type="scientific">Danio rerio</name>
    <name type="common">Zebrafish</name>
    <name type="synonym">Brachydanio rerio</name>
    <dbReference type="NCBI Taxonomy" id="7955"/>
    <lineage>
        <taxon>Eukaryota</taxon>
        <taxon>Metazoa</taxon>
        <taxon>Chordata</taxon>
        <taxon>Craniata</taxon>
        <taxon>Vertebrata</taxon>
        <taxon>Euteleostomi</taxon>
        <taxon>Actinopterygii</taxon>
        <taxon>Neopterygii</taxon>
        <taxon>Teleostei</taxon>
        <taxon>Ostariophysi</taxon>
        <taxon>Cypriniformes</taxon>
        <taxon>Danionidae</taxon>
        <taxon>Danioninae</taxon>
        <taxon>Danio</taxon>
    </lineage>
</organism>
<evidence type="ECO:0000250" key="1"/>
<evidence type="ECO:0000303" key="2">
    <source ref="1"/>
</evidence>
<evidence type="ECO:0000305" key="3"/>
<reference key="1">
    <citation type="submission" date="2007-02" db="EMBL/GenBank/DDBJ databases">
        <authorList>
            <consortium name="NIH - Zebrafish Gene Collection (ZGC) project"/>
        </authorList>
    </citation>
    <scope>NUCLEOTIDE SEQUENCE [LARGE SCALE MRNA] (ISOFORMS 1 AND 2)</scope>
    <source>
        <tissue>Embryo</tissue>
        <tissue>Eye</tissue>
    </source>
</reference>
<protein>
    <recommendedName>
        <fullName>Diphthine--ammonia ligase</fullName>
        <ecNumber>6.3.1.14</ecNumber>
    </recommendedName>
    <alternativeName>
        <fullName>ATP-binding domain-containing protein 4</fullName>
    </alternativeName>
    <alternativeName>
        <fullName>Diphthamide synthase</fullName>
    </alternativeName>
    <alternativeName>
        <fullName>Diphthamide synthetase</fullName>
    </alternativeName>
    <alternativeName>
        <fullName>Protein DPH6 homolog</fullName>
    </alternativeName>
</protein>
<name>DPH6_DANRE</name>
<proteinExistence type="evidence at transcript level"/>
<dbReference type="EC" id="6.3.1.14"/>
<dbReference type="EMBL" id="BC090272">
    <property type="protein sequence ID" value="AAH90272.1"/>
    <property type="molecule type" value="mRNA"/>
</dbReference>
<dbReference type="EMBL" id="BC133118">
    <property type="protein sequence ID" value="AAI33119.1"/>
    <property type="molecule type" value="mRNA"/>
</dbReference>
<dbReference type="RefSeq" id="NP_001013308.2">
    <molecule id="A2RV01-1"/>
    <property type="nucleotide sequence ID" value="NM_001013290.2"/>
</dbReference>
<dbReference type="SMR" id="A2RV01"/>
<dbReference type="FunCoup" id="A2RV01">
    <property type="interactions" value="5"/>
</dbReference>
<dbReference type="STRING" id="7955.ENSDARP00000129691"/>
<dbReference type="PaxDb" id="7955-ENSDARP00000106089"/>
<dbReference type="PeptideAtlas" id="A2RV01"/>
<dbReference type="Ensembl" id="ENSDART00000156774">
    <molecule id="A2RV01-1"/>
    <property type="protein sequence ID" value="ENSDARP00000129691"/>
    <property type="gene ID" value="ENSDARG00000042839"/>
</dbReference>
<dbReference type="GeneID" id="503603"/>
<dbReference type="KEGG" id="dre:503603"/>
<dbReference type="AGR" id="ZFIN:ZDB-GENE-050227-15"/>
<dbReference type="CTD" id="89978"/>
<dbReference type="ZFIN" id="ZDB-GENE-050227-15">
    <property type="gene designation" value="dph6"/>
</dbReference>
<dbReference type="eggNOG" id="KOG2316">
    <property type="taxonomic scope" value="Eukaryota"/>
</dbReference>
<dbReference type="eggNOG" id="KOG2317">
    <property type="taxonomic scope" value="Eukaryota"/>
</dbReference>
<dbReference type="HOGENOM" id="CLU_010289_0_0_1"/>
<dbReference type="InParanoid" id="A2RV01"/>
<dbReference type="OrthoDB" id="686384at2759"/>
<dbReference type="PhylomeDB" id="A2RV01"/>
<dbReference type="UniPathway" id="UPA00559"/>
<dbReference type="PRO" id="PR:A2RV01"/>
<dbReference type="Proteomes" id="UP000000437">
    <property type="component" value="Chromosome 17"/>
</dbReference>
<dbReference type="Bgee" id="ENSDARG00000042839">
    <property type="expression patterns" value="Expressed in liver and 22 other cell types or tissues"/>
</dbReference>
<dbReference type="ExpressionAtlas" id="A2RV01">
    <property type="expression patterns" value="baseline"/>
</dbReference>
<dbReference type="GO" id="GO:0005524">
    <property type="term" value="F:ATP binding"/>
    <property type="evidence" value="ECO:0007669"/>
    <property type="project" value="UniProtKB-KW"/>
</dbReference>
<dbReference type="GO" id="GO:0017178">
    <property type="term" value="F:diphthine-ammonia ligase activity"/>
    <property type="evidence" value="ECO:0007669"/>
    <property type="project" value="UniProtKB-EC"/>
</dbReference>
<dbReference type="GO" id="GO:0017183">
    <property type="term" value="P:protein histidyl modification to diphthamide"/>
    <property type="evidence" value="ECO:0007669"/>
    <property type="project" value="UniProtKB-UniPathway"/>
</dbReference>
<dbReference type="CDD" id="cd01994">
    <property type="entry name" value="AANH_PF0828-like"/>
    <property type="match status" value="1"/>
</dbReference>
<dbReference type="FunFam" id="3.90.1490.10:FF:000001">
    <property type="entry name" value="Diphthine--ammonia ligase"/>
    <property type="match status" value="1"/>
</dbReference>
<dbReference type="FunFam" id="3.40.50.620:FF:000069">
    <property type="entry name" value="diphthine--ammonia ligase"/>
    <property type="match status" value="1"/>
</dbReference>
<dbReference type="Gene3D" id="3.40.50.620">
    <property type="entry name" value="HUPs"/>
    <property type="match status" value="1"/>
</dbReference>
<dbReference type="Gene3D" id="3.90.1490.10">
    <property type="entry name" value="putative n-type atp pyrophosphatase, domain 2"/>
    <property type="match status" value="1"/>
</dbReference>
<dbReference type="InterPro" id="IPR002761">
    <property type="entry name" value="Diphthami_syn_dom"/>
</dbReference>
<dbReference type="InterPro" id="IPR030662">
    <property type="entry name" value="DPH6/MJ0570"/>
</dbReference>
<dbReference type="InterPro" id="IPR014729">
    <property type="entry name" value="Rossmann-like_a/b/a_fold"/>
</dbReference>
<dbReference type="NCBIfam" id="TIGR00290">
    <property type="entry name" value="MJ0570_dom"/>
    <property type="match status" value="1"/>
</dbReference>
<dbReference type="PANTHER" id="PTHR12196:SF2">
    <property type="entry name" value="DIPHTHINE--AMMONIA LIGASE"/>
    <property type="match status" value="1"/>
</dbReference>
<dbReference type="PANTHER" id="PTHR12196">
    <property type="entry name" value="DOMAIN OF UNKNOWN FUNCTION 71 DUF71 -CONTAINING PROTEIN"/>
    <property type="match status" value="1"/>
</dbReference>
<dbReference type="Pfam" id="PF01902">
    <property type="entry name" value="Diphthami_syn_2"/>
    <property type="match status" value="1"/>
</dbReference>
<dbReference type="PIRSF" id="PIRSF039123">
    <property type="entry name" value="Diphthamide_synthase"/>
    <property type="match status" value="1"/>
</dbReference>
<dbReference type="SUPFAM" id="SSF52402">
    <property type="entry name" value="Adenine nucleotide alpha hydrolases-like"/>
    <property type="match status" value="1"/>
</dbReference>